<feature type="chain" id="PRO_0000088231" description="3-phosphoshikimate 1-carboxyvinyltransferase">
    <location>
        <begin position="1"/>
        <end position="450"/>
    </location>
</feature>
<feature type="active site" description="Proton acceptor" evidence="1">
    <location>
        <position position="326"/>
    </location>
</feature>
<feature type="binding site" evidence="1">
    <location>
        <position position="28"/>
    </location>
    <ligand>
        <name>3-phosphoshikimate</name>
        <dbReference type="ChEBI" id="CHEBI:145989"/>
    </ligand>
</feature>
<feature type="binding site" evidence="1">
    <location>
        <position position="28"/>
    </location>
    <ligand>
        <name>phosphoenolpyruvate</name>
        <dbReference type="ChEBI" id="CHEBI:58702"/>
    </ligand>
</feature>
<feature type="binding site" evidence="1">
    <location>
        <position position="29"/>
    </location>
    <ligand>
        <name>3-phosphoshikimate</name>
        <dbReference type="ChEBI" id="CHEBI:145989"/>
    </ligand>
</feature>
<feature type="binding site" evidence="1">
    <location>
        <position position="33"/>
    </location>
    <ligand>
        <name>3-phosphoshikimate</name>
        <dbReference type="ChEBI" id="CHEBI:145989"/>
    </ligand>
</feature>
<feature type="binding site" evidence="1">
    <location>
        <position position="100"/>
    </location>
    <ligand>
        <name>phosphoenolpyruvate</name>
        <dbReference type="ChEBI" id="CHEBI:58702"/>
    </ligand>
</feature>
<feature type="binding site" evidence="1">
    <location>
        <position position="128"/>
    </location>
    <ligand>
        <name>phosphoenolpyruvate</name>
        <dbReference type="ChEBI" id="CHEBI:58702"/>
    </ligand>
</feature>
<feature type="binding site" evidence="1">
    <location>
        <position position="173"/>
    </location>
    <ligand>
        <name>3-phosphoshikimate</name>
        <dbReference type="ChEBI" id="CHEBI:145989"/>
    </ligand>
</feature>
<feature type="binding site" evidence="1">
    <location>
        <position position="175"/>
    </location>
    <ligand>
        <name>3-phosphoshikimate</name>
        <dbReference type="ChEBI" id="CHEBI:145989"/>
    </ligand>
</feature>
<feature type="binding site" evidence="1">
    <location>
        <position position="175"/>
    </location>
    <ligand>
        <name>phosphoenolpyruvate</name>
        <dbReference type="ChEBI" id="CHEBI:58702"/>
    </ligand>
</feature>
<feature type="binding site" evidence="1">
    <location>
        <position position="326"/>
    </location>
    <ligand>
        <name>3-phosphoshikimate</name>
        <dbReference type="ChEBI" id="CHEBI:145989"/>
    </ligand>
</feature>
<feature type="binding site" evidence="1">
    <location>
        <position position="353"/>
    </location>
    <ligand>
        <name>3-phosphoshikimate</name>
        <dbReference type="ChEBI" id="CHEBI:145989"/>
    </ligand>
</feature>
<feature type="binding site" evidence="1">
    <location>
        <position position="357"/>
    </location>
    <ligand>
        <name>phosphoenolpyruvate</name>
        <dbReference type="ChEBI" id="CHEBI:58702"/>
    </ligand>
</feature>
<feature type="binding site" evidence="1">
    <location>
        <position position="402"/>
    </location>
    <ligand>
        <name>phosphoenolpyruvate</name>
        <dbReference type="ChEBI" id="CHEBI:58702"/>
    </ligand>
</feature>
<keyword id="KW-0028">Amino-acid biosynthesis</keyword>
<keyword id="KW-0057">Aromatic amino acid biosynthesis</keyword>
<keyword id="KW-0963">Cytoplasm</keyword>
<keyword id="KW-0808">Transferase</keyword>
<accession>P0C100</accession>
<accession>Q57FY8</accession>
<accession>Q9AGV2</accession>
<evidence type="ECO:0000255" key="1">
    <source>
        <dbReference type="HAMAP-Rule" id="MF_00210"/>
    </source>
</evidence>
<name>AROA_BRUAB</name>
<proteinExistence type="inferred from homology"/>
<reference key="1">
    <citation type="journal article" date="2005" name="J. Bacteriol.">
        <title>Completion of the genome sequence of Brucella abortus and comparison to the highly similar genomes of Brucella melitensis and Brucella suis.</title>
        <authorList>
            <person name="Halling S.M."/>
            <person name="Peterson-Burch B.D."/>
            <person name="Bricker B.J."/>
            <person name="Zuerner R.L."/>
            <person name="Qing Z."/>
            <person name="Li L.-L."/>
            <person name="Kapur V."/>
            <person name="Alt D.P."/>
            <person name="Olsen S.C."/>
        </authorList>
    </citation>
    <scope>NUCLEOTIDE SEQUENCE [LARGE SCALE GENOMIC DNA]</scope>
    <source>
        <strain>9-941</strain>
    </source>
</reference>
<gene>
    <name evidence="1" type="primary">aroA</name>
    <name type="ordered locus">BruAb1_0025</name>
</gene>
<protein>
    <recommendedName>
        <fullName evidence="1">3-phosphoshikimate 1-carboxyvinyltransferase</fullName>
        <ecNumber evidence="1">2.5.1.19</ecNumber>
    </recommendedName>
    <alternativeName>
        <fullName evidence="1">5-enolpyruvylshikimate-3-phosphate synthase</fullName>
        <shortName evidence="1">EPSP synthase</shortName>
        <shortName evidence="1">EPSPS</shortName>
    </alternativeName>
</protein>
<organism>
    <name type="scientific">Brucella abortus biovar 1 (strain 9-941)</name>
    <dbReference type="NCBI Taxonomy" id="262698"/>
    <lineage>
        <taxon>Bacteria</taxon>
        <taxon>Pseudomonadati</taxon>
        <taxon>Pseudomonadota</taxon>
        <taxon>Alphaproteobacteria</taxon>
        <taxon>Hyphomicrobiales</taxon>
        <taxon>Brucellaceae</taxon>
        <taxon>Brucella/Ochrobactrum group</taxon>
        <taxon>Brucella</taxon>
    </lineage>
</organism>
<sequence>MSHSACPKPATARHSQALTGEIRIPGDKSISHRSFMFGGLASGKTRITGLLEGEDVINTGRAMQAMGARIRKEGDVWIINGVGNGCLLQPEAPLDFGNAGTGARLTMGLVGTYDMKTSFIGDASLSKRPMGRVLNPLREMGVQVEAAEGDRMPLTLIGPRTANPIAYRVPMASAQVKSAVLLAGLNTPGVTTVIEPVMTRDHTEKMLQDFGADLTVETDKDGVRHIRIVGQGKLTGQTIDVPGDPSSTAFPLVAALLVEGSEVTIRNVLMNPTRTGLILTLQEMGADIEIIDPRLAGGEDVADLRVKASKLKGVVVPPERAPSMIDEYPVLAIAASFAEGETVMDGLDELRVKESDRLAAVARGLEANGVDCTEGEMSLTVRGRPGGKGLGGGTVATHLDHRIAMSFLVMGLASEKPVTVDDSTMIATSFPEFMGMMAGLGAKIAESGAE</sequence>
<comment type="function">
    <text evidence="1">Catalyzes the transfer of the enolpyruvyl moiety of phosphoenolpyruvate (PEP) to the 5-hydroxyl of shikimate-3-phosphate (S3P) to produce enolpyruvyl shikimate-3-phosphate and inorganic phosphate.</text>
</comment>
<comment type="catalytic activity">
    <reaction evidence="1">
        <text>3-phosphoshikimate + phosphoenolpyruvate = 5-O-(1-carboxyvinyl)-3-phosphoshikimate + phosphate</text>
        <dbReference type="Rhea" id="RHEA:21256"/>
        <dbReference type="ChEBI" id="CHEBI:43474"/>
        <dbReference type="ChEBI" id="CHEBI:57701"/>
        <dbReference type="ChEBI" id="CHEBI:58702"/>
        <dbReference type="ChEBI" id="CHEBI:145989"/>
        <dbReference type="EC" id="2.5.1.19"/>
    </reaction>
    <physiologicalReaction direction="left-to-right" evidence="1">
        <dbReference type="Rhea" id="RHEA:21257"/>
    </physiologicalReaction>
</comment>
<comment type="pathway">
    <text evidence="1">Metabolic intermediate biosynthesis; chorismate biosynthesis; chorismate from D-erythrose 4-phosphate and phosphoenolpyruvate: step 6/7.</text>
</comment>
<comment type="subunit">
    <text evidence="1">Monomer.</text>
</comment>
<comment type="subcellular location">
    <subcellularLocation>
        <location evidence="1">Cytoplasm</location>
    </subcellularLocation>
</comment>
<comment type="similarity">
    <text evidence="1">Belongs to the EPSP synthase family.</text>
</comment>
<dbReference type="EC" id="2.5.1.19" evidence="1"/>
<dbReference type="EMBL" id="AE017223">
    <property type="protein sequence ID" value="AAX73446.1"/>
    <property type="molecule type" value="Genomic_DNA"/>
</dbReference>
<dbReference type="RefSeq" id="WP_011265281.1">
    <property type="nucleotide sequence ID" value="NC_006932.1"/>
</dbReference>
<dbReference type="SMR" id="P0C100"/>
<dbReference type="EnsemblBacteria" id="AAX73446">
    <property type="protein sequence ID" value="AAX73446"/>
    <property type="gene ID" value="BruAb1_0025"/>
</dbReference>
<dbReference type="KEGG" id="bmb:BruAb1_0025"/>
<dbReference type="HOGENOM" id="CLU_024321_0_1_5"/>
<dbReference type="UniPathway" id="UPA00053">
    <property type="reaction ID" value="UER00089"/>
</dbReference>
<dbReference type="Proteomes" id="UP000000540">
    <property type="component" value="Chromosome I"/>
</dbReference>
<dbReference type="GO" id="GO:0005737">
    <property type="term" value="C:cytoplasm"/>
    <property type="evidence" value="ECO:0007669"/>
    <property type="project" value="UniProtKB-SubCell"/>
</dbReference>
<dbReference type="GO" id="GO:0003866">
    <property type="term" value="F:3-phosphoshikimate 1-carboxyvinyltransferase activity"/>
    <property type="evidence" value="ECO:0007669"/>
    <property type="project" value="UniProtKB-UniRule"/>
</dbReference>
<dbReference type="GO" id="GO:0008652">
    <property type="term" value="P:amino acid biosynthetic process"/>
    <property type="evidence" value="ECO:0007669"/>
    <property type="project" value="UniProtKB-KW"/>
</dbReference>
<dbReference type="GO" id="GO:0009073">
    <property type="term" value="P:aromatic amino acid family biosynthetic process"/>
    <property type="evidence" value="ECO:0007669"/>
    <property type="project" value="UniProtKB-KW"/>
</dbReference>
<dbReference type="GO" id="GO:0009423">
    <property type="term" value="P:chorismate biosynthetic process"/>
    <property type="evidence" value="ECO:0007669"/>
    <property type="project" value="UniProtKB-UniRule"/>
</dbReference>
<dbReference type="CDD" id="cd01556">
    <property type="entry name" value="EPSP_synthase"/>
    <property type="match status" value="1"/>
</dbReference>
<dbReference type="FunFam" id="3.65.10.10:FF:000005">
    <property type="entry name" value="3-phosphoshikimate 1-carboxyvinyltransferase"/>
    <property type="match status" value="1"/>
</dbReference>
<dbReference type="FunFam" id="3.65.10.10:FF:000006">
    <property type="entry name" value="3-phosphoshikimate 1-carboxyvinyltransferase"/>
    <property type="match status" value="1"/>
</dbReference>
<dbReference type="Gene3D" id="3.65.10.10">
    <property type="entry name" value="Enolpyruvate transferase domain"/>
    <property type="match status" value="2"/>
</dbReference>
<dbReference type="HAMAP" id="MF_00210">
    <property type="entry name" value="EPSP_synth"/>
    <property type="match status" value="1"/>
</dbReference>
<dbReference type="InterPro" id="IPR001986">
    <property type="entry name" value="Enolpyruvate_Tfrase_dom"/>
</dbReference>
<dbReference type="InterPro" id="IPR036968">
    <property type="entry name" value="Enolpyruvate_Tfrase_sf"/>
</dbReference>
<dbReference type="InterPro" id="IPR006264">
    <property type="entry name" value="EPSP_synthase"/>
</dbReference>
<dbReference type="InterPro" id="IPR023193">
    <property type="entry name" value="EPSP_synthase_CS"/>
</dbReference>
<dbReference type="InterPro" id="IPR013792">
    <property type="entry name" value="RNA3'P_cycl/enolpyr_Trfase_a/b"/>
</dbReference>
<dbReference type="NCBIfam" id="TIGR01356">
    <property type="entry name" value="aroA"/>
    <property type="match status" value="1"/>
</dbReference>
<dbReference type="PANTHER" id="PTHR21090">
    <property type="entry name" value="AROM/DEHYDROQUINATE SYNTHASE"/>
    <property type="match status" value="1"/>
</dbReference>
<dbReference type="PANTHER" id="PTHR21090:SF5">
    <property type="entry name" value="PENTAFUNCTIONAL AROM POLYPEPTIDE"/>
    <property type="match status" value="1"/>
</dbReference>
<dbReference type="Pfam" id="PF00275">
    <property type="entry name" value="EPSP_synthase"/>
    <property type="match status" value="1"/>
</dbReference>
<dbReference type="PIRSF" id="PIRSF000505">
    <property type="entry name" value="EPSPS"/>
    <property type="match status" value="1"/>
</dbReference>
<dbReference type="SUPFAM" id="SSF55205">
    <property type="entry name" value="EPT/RTPC-like"/>
    <property type="match status" value="1"/>
</dbReference>
<dbReference type="PROSITE" id="PS00104">
    <property type="entry name" value="EPSP_SYNTHASE_1"/>
    <property type="match status" value="1"/>
</dbReference>
<dbReference type="PROSITE" id="PS00885">
    <property type="entry name" value="EPSP_SYNTHASE_2"/>
    <property type="match status" value="1"/>
</dbReference>